<accession>Q4WCJ7</accession>
<sequence>MGNSQTKEFRPPLSSSNRRSHQWGSSSSHGRSPYSDRHHAESSRSRGSRPDLSILGIGGSSERDVATLEHRRETKQEREARRLEKERAARVKERERSMREEHVDGGYLVTQGVYVGTEDFNKAVTRQLMIERRLAPFWRGLNDFSESWTEHQLMAAARGLPIPPPDEIPPELEYKNPPKLSGDGKEPSIQHLMVPITSRSQSYGSEASQSSTPAHSLPAPVSPIASGTSTSPLFRSRAKTLASLTTSKLGSQSDSTPKEIHLPEDPFVNGQPIEAYLYKDATECPICFLYYPPYLNRTRCCDQPICSECFVQIKRPDPHPPEHGEAEPNAAAAEGDRQDNQDCQLVSEPAACPFCVQPEFGVTYTPPPFRRGLVYATDPTLRPNFTSPVSSTSSLASANASPGTGRRRATSLSANDPAVITTDRVRPDWAQKLANARAHAARRSAAATALHTAAYLMNSTASGNESRNFSLGRRGVMRRTGQSETPSASSRSGSPALQALAFLTDRRTPGHDTDSAEEGTGNLAPPRNSSRRNRIDDLEEMMMMEAIRLSLASEEERRKKAEKEARKEAKRREKENKKAEKAARKHGFYSNNASSSALDVPSDARLGRVASTSSSITGEDASPSKGKEVDRTSPAATAASSQSSTEIASESMTINPHPNVVEQGPSAQSSMAQLSPRELPKPSHLRQVSSASSSFSSLVESTGEDHSGAYDGNASSTEPLFNFRSLAAVIGDEDKGDGTAEHVEDTSSKPSAEGSASSTAPVADEMPGQSTTPADPIAVKTVAEDRDCLMPKELETQSVEITSATRNAEATT</sequence>
<name>SIP5_ASPFU</name>
<protein>
    <recommendedName>
        <fullName>Protein sip5</fullName>
    </recommendedName>
</protein>
<reference key="1">
    <citation type="journal article" date="2005" name="Nature">
        <title>Genomic sequence of the pathogenic and allergenic filamentous fungus Aspergillus fumigatus.</title>
        <authorList>
            <person name="Nierman W.C."/>
            <person name="Pain A."/>
            <person name="Anderson M.J."/>
            <person name="Wortman J.R."/>
            <person name="Kim H.S."/>
            <person name="Arroyo J."/>
            <person name="Berriman M."/>
            <person name="Abe K."/>
            <person name="Archer D.B."/>
            <person name="Bermejo C."/>
            <person name="Bennett J.W."/>
            <person name="Bowyer P."/>
            <person name="Chen D."/>
            <person name="Collins M."/>
            <person name="Coulsen R."/>
            <person name="Davies R."/>
            <person name="Dyer P.S."/>
            <person name="Farman M.L."/>
            <person name="Fedorova N."/>
            <person name="Fedorova N.D."/>
            <person name="Feldblyum T.V."/>
            <person name="Fischer R."/>
            <person name="Fosker N."/>
            <person name="Fraser A."/>
            <person name="Garcia J.L."/>
            <person name="Garcia M.J."/>
            <person name="Goble A."/>
            <person name="Goldman G.H."/>
            <person name="Gomi K."/>
            <person name="Griffith-Jones S."/>
            <person name="Gwilliam R."/>
            <person name="Haas B.J."/>
            <person name="Haas H."/>
            <person name="Harris D.E."/>
            <person name="Horiuchi H."/>
            <person name="Huang J."/>
            <person name="Humphray S."/>
            <person name="Jimenez J."/>
            <person name="Keller N."/>
            <person name="Khouri H."/>
            <person name="Kitamoto K."/>
            <person name="Kobayashi T."/>
            <person name="Konzack S."/>
            <person name="Kulkarni R."/>
            <person name="Kumagai T."/>
            <person name="Lafton A."/>
            <person name="Latge J.-P."/>
            <person name="Li W."/>
            <person name="Lord A."/>
            <person name="Lu C."/>
            <person name="Majoros W.H."/>
            <person name="May G.S."/>
            <person name="Miller B.L."/>
            <person name="Mohamoud Y."/>
            <person name="Molina M."/>
            <person name="Monod M."/>
            <person name="Mouyna I."/>
            <person name="Mulligan S."/>
            <person name="Murphy L.D."/>
            <person name="O'Neil S."/>
            <person name="Paulsen I."/>
            <person name="Penalva M.A."/>
            <person name="Pertea M."/>
            <person name="Price C."/>
            <person name="Pritchard B.L."/>
            <person name="Quail M.A."/>
            <person name="Rabbinowitsch E."/>
            <person name="Rawlins N."/>
            <person name="Rajandream M.A."/>
            <person name="Reichard U."/>
            <person name="Renauld H."/>
            <person name="Robson G.D."/>
            <person name="Rodriguez de Cordoba S."/>
            <person name="Rodriguez-Pena J.M."/>
            <person name="Ronning C.M."/>
            <person name="Rutter S."/>
            <person name="Salzberg S.L."/>
            <person name="Sanchez M."/>
            <person name="Sanchez-Ferrero J.C."/>
            <person name="Saunders D."/>
            <person name="Seeger K."/>
            <person name="Squares R."/>
            <person name="Squares S."/>
            <person name="Takeuchi M."/>
            <person name="Tekaia F."/>
            <person name="Turner G."/>
            <person name="Vazquez de Aldana C.R."/>
            <person name="Weidman J."/>
            <person name="White O."/>
            <person name="Woodward J.R."/>
            <person name="Yu J.-H."/>
            <person name="Fraser C.M."/>
            <person name="Galagan J.E."/>
            <person name="Asai K."/>
            <person name="Machida M."/>
            <person name="Hall N."/>
            <person name="Barrell B.G."/>
            <person name="Denning D.W."/>
        </authorList>
    </citation>
    <scope>NUCLEOTIDE SEQUENCE [LARGE SCALE GENOMIC DNA]</scope>
    <source>
        <strain>ATCC MYA-4609 / CBS 101355 / FGSC A1100 / Af293</strain>
    </source>
</reference>
<feature type="chain" id="PRO_0000333427" description="Protein sip5">
    <location>
        <begin position="1"/>
        <end position="812"/>
    </location>
</feature>
<feature type="region of interest" description="Disordered" evidence="2">
    <location>
        <begin position="1"/>
        <end position="97"/>
    </location>
</feature>
<feature type="region of interest" description="Disordered" evidence="2">
    <location>
        <begin position="159"/>
        <end position="187"/>
    </location>
</feature>
<feature type="region of interest" description="Disordered" evidence="2">
    <location>
        <begin position="200"/>
        <end position="232"/>
    </location>
</feature>
<feature type="region of interest" description="Disordered" evidence="2">
    <location>
        <begin position="244"/>
        <end position="266"/>
    </location>
</feature>
<feature type="region of interest" description="Disordered" evidence="2">
    <location>
        <begin position="317"/>
        <end position="340"/>
    </location>
</feature>
<feature type="region of interest" description="Disordered" evidence="2">
    <location>
        <begin position="384"/>
        <end position="412"/>
    </location>
</feature>
<feature type="region of interest" description="Disordered" evidence="2">
    <location>
        <begin position="507"/>
        <end position="533"/>
    </location>
</feature>
<feature type="region of interest" description="Disordered" evidence="2">
    <location>
        <begin position="554"/>
        <end position="718"/>
    </location>
</feature>
<feature type="region of interest" description="Disordered" evidence="2">
    <location>
        <begin position="732"/>
        <end position="778"/>
    </location>
</feature>
<feature type="compositionally biased region" description="Low complexity" evidence="2">
    <location>
        <begin position="14"/>
        <end position="33"/>
    </location>
</feature>
<feature type="compositionally biased region" description="Basic and acidic residues" evidence="2">
    <location>
        <begin position="34"/>
        <end position="44"/>
    </location>
</feature>
<feature type="compositionally biased region" description="Basic and acidic residues" evidence="2">
    <location>
        <begin position="61"/>
        <end position="97"/>
    </location>
</feature>
<feature type="compositionally biased region" description="Basic and acidic residues" evidence="2">
    <location>
        <begin position="172"/>
        <end position="187"/>
    </location>
</feature>
<feature type="compositionally biased region" description="Low complexity" evidence="2">
    <location>
        <begin position="200"/>
        <end position="211"/>
    </location>
</feature>
<feature type="compositionally biased region" description="Polar residues" evidence="2">
    <location>
        <begin position="244"/>
        <end position="255"/>
    </location>
</feature>
<feature type="compositionally biased region" description="Basic and acidic residues" evidence="2">
    <location>
        <begin position="317"/>
        <end position="326"/>
    </location>
</feature>
<feature type="compositionally biased region" description="Low complexity" evidence="2">
    <location>
        <begin position="387"/>
        <end position="401"/>
    </location>
</feature>
<feature type="compositionally biased region" description="Basic and acidic residues" evidence="2">
    <location>
        <begin position="554"/>
        <end position="582"/>
    </location>
</feature>
<feature type="compositionally biased region" description="Low complexity" evidence="2">
    <location>
        <begin position="632"/>
        <end position="651"/>
    </location>
</feature>
<feature type="compositionally biased region" description="Low complexity" evidence="2">
    <location>
        <begin position="689"/>
        <end position="701"/>
    </location>
</feature>
<feature type="compositionally biased region" description="Basic and acidic residues" evidence="2">
    <location>
        <begin position="732"/>
        <end position="747"/>
    </location>
</feature>
<feature type="compositionally biased region" description="Low complexity" evidence="2">
    <location>
        <begin position="748"/>
        <end position="758"/>
    </location>
</feature>
<gene>
    <name type="primary">sip5</name>
    <name type="ORF">AFUA_8G04180</name>
</gene>
<comment type="function">
    <text evidence="1">May negatively regulate the snf1 kinase.</text>
</comment>
<comment type="subcellular location">
    <subcellularLocation>
        <location evidence="1">Cytoplasm</location>
    </subcellularLocation>
</comment>
<comment type="similarity">
    <text evidence="3">Belongs to the SIP5 family.</text>
</comment>
<organism>
    <name type="scientific">Aspergillus fumigatus (strain ATCC MYA-4609 / CBS 101355 / FGSC A1100 / Af293)</name>
    <name type="common">Neosartorya fumigata</name>
    <dbReference type="NCBI Taxonomy" id="330879"/>
    <lineage>
        <taxon>Eukaryota</taxon>
        <taxon>Fungi</taxon>
        <taxon>Dikarya</taxon>
        <taxon>Ascomycota</taxon>
        <taxon>Pezizomycotina</taxon>
        <taxon>Eurotiomycetes</taxon>
        <taxon>Eurotiomycetidae</taxon>
        <taxon>Eurotiales</taxon>
        <taxon>Aspergillaceae</taxon>
        <taxon>Aspergillus</taxon>
        <taxon>Aspergillus subgen. Fumigati</taxon>
    </lineage>
</organism>
<evidence type="ECO:0000250" key="1"/>
<evidence type="ECO:0000256" key="2">
    <source>
        <dbReference type="SAM" id="MobiDB-lite"/>
    </source>
</evidence>
<evidence type="ECO:0000305" key="3"/>
<proteinExistence type="inferred from homology"/>
<dbReference type="EMBL" id="AAHF01000013">
    <property type="protein sequence ID" value="EAL85187.1"/>
    <property type="molecule type" value="Genomic_DNA"/>
</dbReference>
<dbReference type="RefSeq" id="XP_747225.1">
    <property type="nucleotide sequence ID" value="XM_742132.1"/>
</dbReference>
<dbReference type="SMR" id="Q4WCJ7"/>
<dbReference type="FunCoup" id="Q4WCJ7">
    <property type="interactions" value="42"/>
</dbReference>
<dbReference type="STRING" id="330879.Q4WCJ7"/>
<dbReference type="EnsemblFungi" id="EAL85187">
    <property type="protein sequence ID" value="EAL85187"/>
    <property type="gene ID" value="AFUA_8G04180"/>
</dbReference>
<dbReference type="GeneID" id="3504809"/>
<dbReference type="KEGG" id="afm:AFUA_8G04180"/>
<dbReference type="VEuPathDB" id="FungiDB:Afu8g04180"/>
<dbReference type="eggNOG" id="KOG2789">
    <property type="taxonomic scope" value="Eukaryota"/>
</dbReference>
<dbReference type="HOGENOM" id="CLU_009068_1_0_1"/>
<dbReference type="InParanoid" id="Q4WCJ7"/>
<dbReference type="OMA" id="CFLTYPP"/>
<dbReference type="OrthoDB" id="21471at2759"/>
<dbReference type="Proteomes" id="UP000002530">
    <property type="component" value="Chromosome 8"/>
</dbReference>
<dbReference type="GO" id="GO:0005737">
    <property type="term" value="C:cytoplasm"/>
    <property type="evidence" value="ECO:0007669"/>
    <property type="project" value="UniProtKB-SubCell"/>
</dbReference>
<dbReference type="CDD" id="cd24139">
    <property type="entry name" value="SIP5-like"/>
    <property type="match status" value="1"/>
</dbReference>
<dbReference type="InterPro" id="IPR039301">
    <property type="entry name" value="Sip5/DA2"/>
</dbReference>
<dbReference type="PANTHER" id="PTHR31315">
    <property type="entry name" value="PROTEIN SIP5"/>
    <property type="match status" value="1"/>
</dbReference>
<dbReference type="PANTHER" id="PTHR31315:SF1">
    <property type="entry name" value="PROTEIN SIP5"/>
    <property type="match status" value="1"/>
</dbReference>
<keyword id="KW-0963">Cytoplasm</keyword>
<keyword id="KW-1185">Reference proteome</keyword>